<reference evidence="3" key="1">
    <citation type="journal article" date="2010" name="BMC Genomics">
        <title>Transcriptome and proteome analysis of Pinctada margaritifera calcifying mantle and shell: focus on biomineralization.</title>
        <authorList>
            <person name="Joubert C."/>
            <person name="Piquemal D."/>
            <person name="Marie B."/>
            <person name="Manchon L."/>
            <person name="Pierrat F."/>
            <person name="Zanella-Cleon I."/>
            <person name="Cochennec-Laureau N."/>
            <person name="Gueguen Y."/>
            <person name="Montagnani C."/>
        </authorList>
    </citation>
    <scope>NUCLEOTIDE SEQUENCE [MRNA]</scope>
    <scope>IDENTIFICATION</scope>
    <source>
        <tissue>Mantle</tissue>
    </source>
</reference>
<reference key="2">
    <citation type="journal article" date="2012" name="Proc. Natl. Acad. Sci. U.S.A.">
        <title>Different secretory repertoires control the biomineralization processes of prism and nacre deposition of the pearl oyster shell.</title>
        <authorList>
            <person name="Marie B."/>
            <person name="Joubert C."/>
            <person name="Tayale A."/>
            <person name="Zanella-Cleon I."/>
            <person name="Belliard C."/>
            <person name="Piquemal D."/>
            <person name="Cochennec-Laureau N."/>
            <person name="Marin F."/>
            <person name="Gueguen Y."/>
            <person name="Montagnani C."/>
        </authorList>
    </citation>
    <scope>PROTEIN SEQUENCE OF 41-54</scope>
    <scope>SUBCELLULAR LOCATION</scope>
    <scope>TISSUE SPECIFICITY</scope>
    <source>
        <tissue>Shell</tissue>
    </source>
</reference>
<organism>
    <name type="scientific">Margaritifera margaritifera</name>
    <name type="common">Freshwater pearl mussel</name>
    <dbReference type="NCBI Taxonomy" id="102329"/>
    <lineage>
        <taxon>Eukaryota</taxon>
        <taxon>Metazoa</taxon>
        <taxon>Spiralia</taxon>
        <taxon>Lophotrochozoa</taxon>
        <taxon>Mollusca</taxon>
        <taxon>Bivalvia</taxon>
        <taxon>Autobranchia</taxon>
        <taxon>Pteriomorphia</taxon>
        <taxon>Pterioida</taxon>
        <taxon>Pterioidea</taxon>
        <taxon>Pteriidae</taxon>
        <taxon>Pinctada</taxon>
    </lineage>
</organism>
<protein>
    <recommendedName>
        <fullName>Uncharacterized shell protein 1</fullName>
    </recommendedName>
    <alternativeName>
        <fullName>Prism tissue inhibitor metalloproteinase protein 1</fullName>
    </alternativeName>
</protein>
<dbReference type="EMBL" id="HE610391">
    <property type="protein sequence ID" value="CCE46165.1"/>
    <property type="molecule type" value="mRNA"/>
</dbReference>
<dbReference type="GO" id="GO:0005576">
    <property type="term" value="C:extracellular region"/>
    <property type="evidence" value="ECO:0007669"/>
    <property type="project" value="UniProtKB-SubCell"/>
</dbReference>
<dbReference type="Gene3D" id="2.40.50.120">
    <property type="match status" value="1"/>
</dbReference>
<dbReference type="InterPro" id="IPR008993">
    <property type="entry name" value="TIMP-like_OB-fold"/>
</dbReference>
<dbReference type="SUPFAM" id="SSF50242">
    <property type="entry name" value="TIMP-like"/>
    <property type="match status" value="1"/>
</dbReference>
<name>USP1_PINMG</name>
<keyword id="KW-0903">Direct protein sequencing</keyword>
<keyword id="KW-0964">Secreted</keyword>
<keyword id="KW-0732">Signal</keyword>
<evidence type="ECO:0000255" key="1"/>
<evidence type="ECO:0000269" key="2">
    <source>
    </source>
</evidence>
<evidence type="ECO:0000305" key="3"/>
<sequence length="146" mass="16464">MQFRPSIALVLSIVGILSLEISWTDGCTCFMETRREKCQRSTFGFIGYPYFAGRTNIGGMEYNRFCFFIVRIHKGLSVVFGEPCVYSSVSSAACGTGFYSGSLSIVNGYIESGVKQVNLCGWNERWRSVPSFVKFMFLTQPNWCYA</sequence>
<feature type="signal peptide" evidence="1">
    <location>
        <begin position="1"/>
        <end position="26"/>
    </location>
</feature>
<feature type="chain" id="PRO_0000417921" description="Uncharacterized shell protein 1" evidence="1">
    <location>
        <begin position="27"/>
        <end position="146"/>
    </location>
</feature>
<proteinExistence type="evidence at protein level"/>
<accession>H2A0M4</accession>
<comment type="subcellular location">
    <subcellularLocation>
        <location evidence="2">Secreted</location>
    </subcellularLocation>
</comment>
<comment type="tissue specificity">
    <text evidence="2">Prismatic layer of shell (at protein level). Expressed primarily in the mantle with highest level in the mantle edge and lower level in the mantle pallium.</text>
</comment>